<reference key="1">
    <citation type="journal article" date="2008" name="BMC Genomics">
        <title>Genomics of an extreme psychrophile, Psychromonas ingrahamii.</title>
        <authorList>
            <person name="Riley M."/>
            <person name="Staley J.T."/>
            <person name="Danchin A."/>
            <person name="Wang T.Z."/>
            <person name="Brettin T.S."/>
            <person name="Hauser L.J."/>
            <person name="Land M.L."/>
            <person name="Thompson L.S."/>
        </authorList>
    </citation>
    <scope>NUCLEOTIDE SEQUENCE [LARGE SCALE GENOMIC DNA]</scope>
    <source>
        <strain>DSM 17664 / CCUG 51855 / 37</strain>
    </source>
</reference>
<dbReference type="EC" id="3.2.1.52" evidence="1"/>
<dbReference type="EMBL" id="CP000510">
    <property type="protein sequence ID" value="ABM03755.1"/>
    <property type="molecule type" value="Genomic_DNA"/>
</dbReference>
<dbReference type="RefSeq" id="WP_011770315.1">
    <property type="nucleotide sequence ID" value="NC_008709.1"/>
</dbReference>
<dbReference type="SMR" id="A1SW90"/>
<dbReference type="STRING" id="357804.Ping_1987"/>
<dbReference type="CAZy" id="GH3">
    <property type="family name" value="Glycoside Hydrolase Family 3"/>
</dbReference>
<dbReference type="KEGG" id="pin:Ping_1987"/>
<dbReference type="eggNOG" id="COG1472">
    <property type="taxonomic scope" value="Bacteria"/>
</dbReference>
<dbReference type="HOGENOM" id="CLU_008392_0_0_6"/>
<dbReference type="OrthoDB" id="9786661at2"/>
<dbReference type="UniPathway" id="UPA00544"/>
<dbReference type="Proteomes" id="UP000000639">
    <property type="component" value="Chromosome"/>
</dbReference>
<dbReference type="GO" id="GO:0005737">
    <property type="term" value="C:cytoplasm"/>
    <property type="evidence" value="ECO:0007669"/>
    <property type="project" value="UniProtKB-SubCell"/>
</dbReference>
<dbReference type="GO" id="GO:0004563">
    <property type="term" value="F:beta-N-acetylhexosaminidase activity"/>
    <property type="evidence" value="ECO:0007669"/>
    <property type="project" value="UniProtKB-UniRule"/>
</dbReference>
<dbReference type="GO" id="GO:0005975">
    <property type="term" value="P:carbohydrate metabolic process"/>
    <property type="evidence" value="ECO:0007669"/>
    <property type="project" value="InterPro"/>
</dbReference>
<dbReference type="GO" id="GO:0051301">
    <property type="term" value="P:cell division"/>
    <property type="evidence" value="ECO:0007669"/>
    <property type="project" value="UniProtKB-KW"/>
</dbReference>
<dbReference type="GO" id="GO:0071555">
    <property type="term" value="P:cell wall organization"/>
    <property type="evidence" value="ECO:0007669"/>
    <property type="project" value="UniProtKB-KW"/>
</dbReference>
<dbReference type="GO" id="GO:0009252">
    <property type="term" value="P:peptidoglycan biosynthetic process"/>
    <property type="evidence" value="ECO:0007669"/>
    <property type="project" value="UniProtKB-KW"/>
</dbReference>
<dbReference type="GO" id="GO:0009254">
    <property type="term" value="P:peptidoglycan turnover"/>
    <property type="evidence" value="ECO:0007669"/>
    <property type="project" value="UniProtKB-UniRule"/>
</dbReference>
<dbReference type="GO" id="GO:0008360">
    <property type="term" value="P:regulation of cell shape"/>
    <property type="evidence" value="ECO:0007669"/>
    <property type="project" value="UniProtKB-KW"/>
</dbReference>
<dbReference type="FunFam" id="3.20.20.300:FF:000001">
    <property type="entry name" value="Beta-hexosaminidase"/>
    <property type="match status" value="1"/>
</dbReference>
<dbReference type="Gene3D" id="3.20.20.300">
    <property type="entry name" value="Glycoside hydrolase, family 3, N-terminal domain"/>
    <property type="match status" value="1"/>
</dbReference>
<dbReference type="HAMAP" id="MF_00364">
    <property type="entry name" value="NagZ"/>
    <property type="match status" value="1"/>
</dbReference>
<dbReference type="InterPro" id="IPR022956">
    <property type="entry name" value="Beta_hexosaminidase_bac"/>
</dbReference>
<dbReference type="InterPro" id="IPR019800">
    <property type="entry name" value="Glyco_hydro_3_AS"/>
</dbReference>
<dbReference type="InterPro" id="IPR001764">
    <property type="entry name" value="Glyco_hydro_3_N"/>
</dbReference>
<dbReference type="InterPro" id="IPR036962">
    <property type="entry name" value="Glyco_hydro_3_N_sf"/>
</dbReference>
<dbReference type="InterPro" id="IPR017853">
    <property type="entry name" value="Glycoside_hydrolase_SF"/>
</dbReference>
<dbReference type="InterPro" id="IPR050226">
    <property type="entry name" value="NagZ_Beta-hexosaminidase"/>
</dbReference>
<dbReference type="NCBIfam" id="NF003740">
    <property type="entry name" value="PRK05337.1"/>
    <property type="match status" value="1"/>
</dbReference>
<dbReference type="PANTHER" id="PTHR30480:SF13">
    <property type="entry name" value="BETA-HEXOSAMINIDASE"/>
    <property type="match status" value="1"/>
</dbReference>
<dbReference type="PANTHER" id="PTHR30480">
    <property type="entry name" value="BETA-HEXOSAMINIDASE-RELATED"/>
    <property type="match status" value="1"/>
</dbReference>
<dbReference type="Pfam" id="PF00933">
    <property type="entry name" value="Glyco_hydro_3"/>
    <property type="match status" value="1"/>
</dbReference>
<dbReference type="SUPFAM" id="SSF51445">
    <property type="entry name" value="(Trans)glycosidases"/>
    <property type="match status" value="1"/>
</dbReference>
<dbReference type="PROSITE" id="PS00775">
    <property type="entry name" value="GLYCOSYL_HYDROL_F3"/>
    <property type="match status" value="1"/>
</dbReference>
<proteinExistence type="inferred from homology"/>
<organism>
    <name type="scientific">Psychromonas ingrahamii (strain DSM 17664 / CCUG 51855 / 37)</name>
    <dbReference type="NCBI Taxonomy" id="357804"/>
    <lineage>
        <taxon>Bacteria</taxon>
        <taxon>Pseudomonadati</taxon>
        <taxon>Pseudomonadota</taxon>
        <taxon>Gammaproteobacteria</taxon>
        <taxon>Alteromonadales</taxon>
        <taxon>Psychromonadaceae</taxon>
        <taxon>Psychromonas</taxon>
    </lineage>
</organism>
<accession>A1SW90</accession>
<feature type="chain" id="PRO_1000005660" description="Beta-hexosaminidase">
    <location>
        <begin position="1"/>
        <end position="337"/>
    </location>
</feature>
<feature type="active site" description="Proton donor/acceptor" evidence="1">
    <location>
        <position position="176"/>
    </location>
</feature>
<feature type="active site" description="Nucleophile" evidence="1">
    <location>
        <position position="248"/>
    </location>
</feature>
<feature type="binding site" evidence="1">
    <location>
        <position position="62"/>
    </location>
    <ligand>
        <name>substrate</name>
    </ligand>
</feature>
<feature type="binding site" evidence="1">
    <location>
        <position position="70"/>
    </location>
    <ligand>
        <name>substrate</name>
    </ligand>
</feature>
<feature type="binding site" evidence="1">
    <location>
        <position position="133"/>
    </location>
    <ligand>
        <name>substrate</name>
    </ligand>
</feature>
<feature type="binding site" evidence="1">
    <location>
        <begin position="163"/>
        <end position="164"/>
    </location>
    <ligand>
        <name>substrate</name>
    </ligand>
</feature>
<feature type="site" description="Important for catalytic activity" evidence="1">
    <location>
        <position position="174"/>
    </location>
</feature>
<name>NAGZ_PSYIN</name>
<comment type="function">
    <text evidence="1">Plays a role in peptidoglycan recycling by cleaving the terminal beta-1,4-linked N-acetylglucosamine (GlcNAc) from peptide-linked peptidoglycan fragments, giving rise to free GlcNAc, anhydro-N-acetylmuramic acid and anhydro-N-acetylmuramic acid-linked peptides.</text>
</comment>
<comment type="catalytic activity">
    <reaction evidence="1">
        <text>Hydrolysis of terminal non-reducing N-acetyl-D-hexosamine residues in N-acetyl-beta-D-hexosaminides.</text>
        <dbReference type="EC" id="3.2.1.52"/>
    </reaction>
</comment>
<comment type="pathway">
    <text evidence="1">Cell wall biogenesis; peptidoglycan recycling.</text>
</comment>
<comment type="subcellular location">
    <subcellularLocation>
        <location evidence="1">Cytoplasm</location>
    </subcellularLocation>
</comment>
<comment type="similarity">
    <text evidence="1">Belongs to the glycosyl hydrolase 3 family. NagZ subfamily.</text>
</comment>
<sequence>MRPVILDVEGYELDSEEKEILAHPLVAGIILFTRNYYDIEQLKALVKDIRRYAGNELLIAVDHEGGRVQRFRDDFTRLPSAGSLIEKNDMKTACELAFSSAWVMASELIACDIDFSFAPVLDLNGISNVIQNRAFSSSITETVTLAEAYINGMKSAGMVSTGKHFPGHGSVEADSHTALPVDSRSELEIFTKDIKPFENLIKKGALDAVMPSHVVYSQCDLQPAGFSSYWLDDVLRTRLGFKGVVISDDLSMHGASFVGNHLSRAESAIQAGCDLILACNDRSGAVSILDNLKVKPTAQYHAVNQLRSTKNKFILPLNKNPIWIKNKQMLMQLSEQF</sequence>
<evidence type="ECO:0000255" key="1">
    <source>
        <dbReference type="HAMAP-Rule" id="MF_00364"/>
    </source>
</evidence>
<gene>
    <name evidence="1" type="primary">nagZ</name>
    <name type="ordered locus">Ping_1987</name>
</gene>
<keyword id="KW-0131">Cell cycle</keyword>
<keyword id="KW-0132">Cell division</keyword>
<keyword id="KW-0133">Cell shape</keyword>
<keyword id="KW-0961">Cell wall biogenesis/degradation</keyword>
<keyword id="KW-0963">Cytoplasm</keyword>
<keyword id="KW-0326">Glycosidase</keyword>
<keyword id="KW-0378">Hydrolase</keyword>
<keyword id="KW-0573">Peptidoglycan synthesis</keyword>
<keyword id="KW-1185">Reference proteome</keyword>
<protein>
    <recommendedName>
        <fullName evidence="1">Beta-hexosaminidase</fullName>
        <ecNumber evidence="1">3.2.1.52</ecNumber>
    </recommendedName>
    <alternativeName>
        <fullName evidence="1">Beta-N-acetylhexosaminidase</fullName>
    </alternativeName>
    <alternativeName>
        <fullName evidence="1">N-acetyl-beta-glucosaminidase</fullName>
    </alternativeName>
</protein>